<sequence>MEDHTVHQTEHMTTIEAHAVSQQVGQVHVATYTEHGMLSADEDSPSSPDDDAYDDSDILNSTGTDEVTAHLAAAGPVGMAAAAAVATGKKRKRPHIFESNPSIRKRQQTRLLRKLRATLDEYTTRVGQQAIVLCISPSKPNPVFRVFGAAPLENVVRKYKSMILEDLENALAEHAPPGGGELSSELPPLTIDGIPVSVDKMTQAQLRAFIPEMLKYSTGRGKPGWGKESCKPIWWPEDIPWANVRSDVRTEEQKQRVSWTQALRTIVKNCYKQHGREDLLYAFEDQVTTQVATTATHSIAHLVPSQTVVQTISNPDGTVSLIQVGTGATVATLADASELPGTVTVAQVNYSTVTDGEVEQNWATLQGGEMTIQTTQASEATQAVASLAEAAVAASQEMQTGATVTMALNRYSLEGALKFGEAAAHAVATLAEATLQGGGQIVLAGETAAAVGALTGVPDGSGLVQIPVSMYQTVVTSLAQGNRPVQVAMAPVTTRIDNTMTLDGQAVEVVTLEQ</sequence>
<keyword id="KW-0010">Activator</keyword>
<keyword id="KW-0025">Alternative splicing</keyword>
<keyword id="KW-0217">Developmental protein</keyword>
<keyword id="KW-0238">DNA-binding</keyword>
<keyword id="KW-0539">Nucleus</keyword>
<keyword id="KW-1185">Reference proteome</keyword>
<keyword id="KW-0804">Transcription</keyword>
<keyword id="KW-0805">Transcription regulation</keyword>
<organism>
    <name type="scientific">Danio rerio</name>
    <name type="common">Zebrafish</name>
    <name type="synonym">Brachydanio rerio</name>
    <dbReference type="NCBI Taxonomy" id="7955"/>
    <lineage>
        <taxon>Eukaryota</taxon>
        <taxon>Metazoa</taxon>
        <taxon>Chordata</taxon>
        <taxon>Craniata</taxon>
        <taxon>Vertebrata</taxon>
        <taxon>Euteleostomi</taxon>
        <taxon>Actinopterygii</taxon>
        <taxon>Neopterygii</taxon>
        <taxon>Teleostei</taxon>
        <taxon>Ostariophysi</taxon>
        <taxon>Cypriniformes</taxon>
        <taxon>Danionidae</taxon>
        <taxon>Danioninae</taxon>
        <taxon>Danio</taxon>
    </lineage>
</organism>
<accession>Q90X44</accession>
<accession>O93570</accession>
<accession>Q7ZTS6</accession>
<dbReference type="EMBL" id="AF087671">
    <property type="protein sequence ID" value="AAC36478.1"/>
    <property type="molecule type" value="mRNA"/>
</dbReference>
<dbReference type="EMBL" id="AL590150">
    <property type="protein sequence ID" value="CAC94898.1"/>
    <property type="molecule type" value="Genomic_DNA"/>
</dbReference>
<dbReference type="EMBL" id="BC044537">
    <property type="protein sequence ID" value="AAH44537.1"/>
    <property type="molecule type" value="mRNA"/>
</dbReference>
<dbReference type="RefSeq" id="NP_001315469.1">
    <molecule id="Q90X44-2"/>
    <property type="nucleotide sequence ID" value="NM_001328540.1"/>
</dbReference>
<dbReference type="RefSeq" id="NP_571755.2">
    <molecule id="Q90X44-1"/>
    <property type="nucleotide sequence ID" value="NM_131680.2"/>
</dbReference>
<dbReference type="SMR" id="Q90X44"/>
<dbReference type="FunCoup" id="Q90X44">
    <property type="interactions" value="3526"/>
</dbReference>
<dbReference type="STRING" id="7955.ENSDARP00000116798"/>
<dbReference type="PaxDb" id="7955-ENSDARP00000000019"/>
<dbReference type="Ensembl" id="ENSDART00000181044">
    <molecule id="Q90X44-2"/>
    <property type="protein sequence ID" value="ENSDARP00000149440"/>
    <property type="gene ID" value="ENSDARG00000000018"/>
</dbReference>
<dbReference type="GeneID" id="64604"/>
<dbReference type="KEGG" id="dre:64604"/>
<dbReference type="AGR" id="ZFIN:ZDB-GENE-001221-1"/>
<dbReference type="CTD" id="4899"/>
<dbReference type="ZFIN" id="ZDB-GENE-001221-1">
    <property type="gene designation" value="nrf1"/>
</dbReference>
<dbReference type="eggNOG" id="ENOG502QTK1">
    <property type="taxonomic scope" value="Eukaryota"/>
</dbReference>
<dbReference type="HOGENOM" id="CLU_018156_3_1_1"/>
<dbReference type="InParanoid" id="Q90X44"/>
<dbReference type="OMA" id="EVEPSWA"/>
<dbReference type="OrthoDB" id="10031051at2759"/>
<dbReference type="PhylomeDB" id="Q90X44"/>
<dbReference type="TreeFam" id="TF105308"/>
<dbReference type="PRO" id="PR:Q90X44"/>
<dbReference type="Proteomes" id="UP000000437">
    <property type="component" value="Chromosome 4"/>
</dbReference>
<dbReference type="Bgee" id="ENSDARG00000000018">
    <property type="expression patterns" value="Expressed in cleaving embryo and 39 other cell types or tissues"/>
</dbReference>
<dbReference type="GO" id="GO:0005634">
    <property type="term" value="C:nucleus"/>
    <property type="evidence" value="ECO:0000250"/>
    <property type="project" value="AgBase"/>
</dbReference>
<dbReference type="GO" id="GO:0000981">
    <property type="term" value="F:DNA-binding transcription factor activity, RNA polymerase II-specific"/>
    <property type="evidence" value="ECO:0000318"/>
    <property type="project" value="GO_Central"/>
</dbReference>
<dbReference type="GO" id="GO:0042803">
    <property type="term" value="F:protein homodimerization activity"/>
    <property type="evidence" value="ECO:0000250"/>
    <property type="project" value="AgBase"/>
</dbReference>
<dbReference type="GO" id="GO:0000978">
    <property type="term" value="F:RNA polymerase II cis-regulatory region sequence-specific DNA binding"/>
    <property type="evidence" value="ECO:0000250"/>
    <property type="project" value="AgBase"/>
</dbReference>
<dbReference type="GO" id="GO:0070417">
    <property type="term" value="P:cellular response to cold"/>
    <property type="evidence" value="ECO:0000314"/>
    <property type="project" value="ZFIN"/>
</dbReference>
<dbReference type="GO" id="GO:0003407">
    <property type="term" value="P:neural retina development"/>
    <property type="evidence" value="ECO:0000315"/>
    <property type="project" value="UniProtKB"/>
</dbReference>
<dbReference type="GO" id="GO:0045494">
    <property type="term" value="P:photoreceptor cell maintenance"/>
    <property type="evidence" value="ECO:0000315"/>
    <property type="project" value="ZFIN"/>
</dbReference>
<dbReference type="GO" id="GO:0006357">
    <property type="term" value="P:regulation of transcription by RNA polymerase II"/>
    <property type="evidence" value="ECO:0000318"/>
    <property type="project" value="GO_Central"/>
</dbReference>
<dbReference type="GO" id="GO:0014823">
    <property type="term" value="P:response to activity"/>
    <property type="evidence" value="ECO:0000314"/>
    <property type="project" value="ZFIN"/>
</dbReference>
<dbReference type="GO" id="GO:0060041">
    <property type="term" value="P:retina development in camera-type eye"/>
    <property type="evidence" value="ECO:0000315"/>
    <property type="project" value="ZFIN"/>
</dbReference>
<dbReference type="GO" id="GO:0001895">
    <property type="term" value="P:retina homeostasis"/>
    <property type="evidence" value="ECO:0000315"/>
    <property type="project" value="ZFIN"/>
</dbReference>
<dbReference type="InterPro" id="IPR039142">
    <property type="entry name" value="NRF1/Ewg"/>
</dbReference>
<dbReference type="InterPro" id="IPR019525">
    <property type="entry name" value="Nrf1_NLS/DNA-bd_dimer"/>
</dbReference>
<dbReference type="PANTHER" id="PTHR20338">
    <property type="entry name" value="NUCLEAR RESPIRATORY FACTOR 1"/>
    <property type="match status" value="1"/>
</dbReference>
<dbReference type="Pfam" id="PF10491">
    <property type="entry name" value="Nrf1_DNA-bind"/>
    <property type="match status" value="1"/>
</dbReference>
<feature type="chain" id="PRO_0000100211" description="Nuclear respiratory factor 1">
    <location>
        <begin position="1"/>
        <end position="514"/>
    </location>
</feature>
<feature type="DNA-binding region" evidence="1">
    <location>
        <begin position="109"/>
        <end position="307"/>
    </location>
</feature>
<feature type="region of interest" description="Dimerization" evidence="1">
    <location>
        <begin position="1"/>
        <end position="78"/>
    </location>
</feature>
<feature type="region of interest" description="Disordered" evidence="2">
    <location>
        <begin position="38"/>
        <end position="61"/>
    </location>
</feature>
<feature type="region of interest" description="Required for transcriptional activation" evidence="1">
    <location>
        <begin position="303"/>
        <end position="488"/>
    </location>
</feature>
<feature type="short sequence motif" description="Nuclear localization signal" evidence="1">
    <location>
        <begin position="88"/>
        <end position="116"/>
    </location>
</feature>
<feature type="compositionally biased region" description="Acidic residues" evidence="2">
    <location>
        <begin position="40"/>
        <end position="57"/>
    </location>
</feature>
<feature type="splice variant" id="VSP_019575" description="In isoform 2." evidence="4">
    <original>RYSLEGALKFG</original>
    <variation>S</variation>
    <location>
        <begin position="410"/>
        <end position="420"/>
    </location>
</feature>
<feature type="sequence conflict" description="In Ref. 3; AAH44537." evidence="5" ref="3">
    <original>R</original>
    <variation>G</variation>
    <location>
        <position position="157"/>
    </location>
</feature>
<feature type="sequence conflict" description="In Ref. 1; AAC36478." evidence="5" ref="1">
    <original>L</original>
    <variation>P</variation>
    <location>
        <position position="302"/>
    </location>
</feature>
<feature type="sequence conflict" description="In Ref. 1; AAC36478." evidence="5" ref="1">
    <original>Q</original>
    <variation>R</variation>
    <location>
        <position position="399"/>
    </location>
</feature>
<comment type="function">
    <text evidence="3">Probable transcription factor that is required for normal development of the outer retina.</text>
</comment>
<comment type="subunit">
    <text evidence="1">Homodimer. Binds DNA as a dimer (By similarity).</text>
</comment>
<comment type="subcellular location">
    <subcellularLocation>
        <location>Nucleus</location>
    </subcellularLocation>
</comment>
<comment type="alternative products">
    <event type="alternative splicing"/>
    <isoform>
        <id>Q90X44-2</id>
        <name>1</name>
        <sequence type="displayed"/>
    </isoform>
    <isoform>
        <id>Q90X44-1</id>
        <name>2</name>
        <sequence type="described" ref="VSP_019575"/>
    </isoform>
</comment>
<comment type="developmental stage">
    <text evidence="3">Expressed in the developing eye and CNS prior to neuronal differentiation. First detected at around 18 hours post-fertilization (hpf) in the eye primordia and brain. At 24-42 hpf, expressed in most cells of the developing eyes, CNS and ears. At 48 hpf, also detected in the optic nerve and tracts. By 56 hpf, levels are barely detectable.</text>
</comment>
<comment type="similarity">
    <text evidence="5">Belongs to the NRF1/Ewg family.</text>
</comment>
<name>NRF1_DANRE</name>
<gene>
    <name type="primary">nrf1</name>
</gene>
<protein>
    <recommendedName>
        <fullName>Nuclear respiratory factor 1</fullName>
        <shortName>Nrf-1</shortName>
    </recommendedName>
    <alternativeName>
        <fullName>Not really finished protein</fullName>
    </alternativeName>
</protein>
<proteinExistence type="evidence at transcript level"/>
<reference key="1">
    <citation type="journal article" date="1998" name="Development">
        <title>Not really finished is crucial for development of the zebrafish outer retina and encodes a transcription factor highly homologous to human nuclear respiratory factor-1 and avian initiation binding repressor.</title>
        <authorList>
            <person name="Becker T.S."/>
            <person name="Burgess S.M."/>
            <person name="Amsterdam A.H."/>
            <person name="Allende M.L."/>
            <person name="Hopkins N.H."/>
        </authorList>
    </citation>
    <scope>NUCLEOTIDE SEQUENCE [MRNA] (ISOFORM 2)</scope>
    <scope>FUNCTION</scope>
    <scope>DEVELOPMENTAL STAGE</scope>
    <source>
        <tissue>Embryo</tissue>
    </source>
</reference>
<reference key="2">
    <citation type="journal article" date="2013" name="Nature">
        <title>The zebrafish reference genome sequence and its relationship to the human genome.</title>
        <authorList>
            <person name="Howe K."/>
            <person name="Clark M.D."/>
            <person name="Torroja C.F."/>
            <person name="Torrance J."/>
            <person name="Berthelot C."/>
            <person name="Muffato M."/>
            <person name="Collins J.E."/>
            <person name="Humphray S."/>
            <person name="McLaren K."/>
            <person name="Matthews L."/>
            <person name="McLaren S."/>
            <person name="Sealy I."/>
            <person name="Caccamo M."/>
            <person name="Churcher C."/>
            <person name="Scott C."/>
            <person name="Barrett J.C."/>
            <person name="Koch R."/>
            <person name="Rauch G.J."/>
            <person name="White S."/>
            <person name="Chow W."/>
            <person name="Kilian B."/>
            <person name="Quintais L.T."/>
            <person name="Guerra-Assuncao J.A."/>
            <person name="Zhou Y."/>
            <person name="Gu Y."/>
            <person name="Yen J."/>
            <person name="Vogel J.H."/>
            <person name="Eyre T."/>
            <person name="Redmond S."/>
            <person name="Banerjee R."/>
            <person name="Chi J."/>
            <person name="Fu B."/>
            <person name="Langley E."/>
            <person name="Maguire S.F."/>
            <person name="Laird G.K."/>
            <person name="Lloyd D."/>
            <person name="Kenyon E."/>
            <person name="Donaldson S."/>
            <person name="Sehra H."/>
            <person name="Almeida-King J."/>
            <person name="Loveland J."/>
            <person name="Trevanion S."/>
            <person name="Jones M."/>
            <person name="Quail M."/>
            <person name="Willey D."/>
            <person name="Hunt A."/>
            <person name="Burton J."/>
            <person name="Sims S."/>
            <person name="McLay K."/>
            <person name="Plumb B."/>
            <person name="Davis J."/>
            <person name="Clee C."/>
            <person name="Oliver K."/>
            <person name="Clark R."/>
            <person name="Riddle C."/>
            <person name="Elliot D."/>
            <person name="Threadgold G."/>
            <person name="Harden G."/>
            <person name="Ware D."/>
            <person name="Begum S."/>
            <person name="Mortimore B."/>
            <person name="Kerry G."/>
            <person name="Heath P."/>
            <person name="Phillimore B."/>
            <person name="Tracey A."/>
            <person name="Corby N."/>
            <person name="Dunn M."/>
            <person name="Johnson C."/>
            <person name="Wood J."/>
            <person name="Clark S."/>
            <person name="Pelan S."/>
            <person name="Griffiths G."/>
            <person name="Smith M."/>
            <person name="Glithero R."/>
            <person name="Howden P."/>
            <person name="Barker N."/>
            <person name="Lloyd C."/>
            <person name="Stevens C."/>
            <person name="Harley J."/>
            <person name="Holt K."/>
            <person name="Panagiotidis G."/>
            <person name="Lovell J."/>
            <person name="Beasley H."/>
            <person name="Henderson C."/>
            <person name="Gordon D."/>
            <person name="Auger K."/>
            <person name="Wright D."/>
            <person name="Collins J."/>
            <person name="Raisen C."/>
            <person name="Dyer L."/>
            <person name="Leung K."/>
            <person name="Robertson L."/>
            <person name="Ambridge K."/>
            <person name="Leongamornlert D."/>
            <person name="McGuire S."/>
            <person name="Gilderthorp R."/>
            <person name="Griffiths C."/>
            <person name="Manthravadi D."/>
            <person name="Nichol S."/>
            <person name="Barker G."/>
            <person name="Whitehead S."/>
            <person name="Kay M."/>
            <person name="Brown J."/>
            <person name="Murnane C."/>
            <person name="Gray E."/>
            <person name="Humphries M."/>
            <person name="Sycamore N."/>
            <person name="Barker D."/>
            <person name="Saunders D."/>
            <person name="Wallis J."/>
            <person name="Babbage A."/>
            <person name="Hammond S."/>
            <person name="Mashreghi-Mohammadi M."/>
            <person name="Barr L."/>
            <person name="Martin S."/>
            <person name="Wray P."/>
            <person name="Ellington A."/>
            <person name="Matthews N."/>
            <person name="Ellwood M."/>
            <person name="Woodmansey R."/>
            <person name="Clark G."/>
            <person name="Cooper J."/>
            <person name="Tromans A."/>
            <person name="Grafham D."/>
            <person name="Skuce C."/>
            <person name="Pandian R."/>
            <person name="Andrews R."/>
            <person name="Harrison E."/>
            <person name="Kimberley A."/>
            <person name="Garnett J."/>
            <person name="Fosker N."/>
            <person name="Hall R."/>
            <person name="Garner P."/>
            <person name="Kelly D."/>
            <person name="Bird C."/>
            <person name="Palmer S."/>
            <person name="Gehring I."/>
            <person name="Berger A."/>
            <person name="Dooley C.M."/>
            <person name="Ersan-Urun Z."/>
            <person name="Eser C."/>
            <person name="Geiger H."/>
            <person name="Geisler M."/>
            <person name="Karotki L."/>
            <person name="Kirn A."/>
            <person name="Konantz J."/>
            <person name="Konantz M."/>
            <person name="Oberlander M."/>
            <person name="Rudolph-Geiger S."/>
            <person name="Teucke M."/>
            <person name="Lanz C."/>
            <person name="Raddatz G."/>
            <person name="Osoegawa K."/>
            <person name="Zhu B."/>
            <person name="Rapp A."/>
            <person name="Widaa S."/>
            <person name="Langford C."/>
            <person name="Yang F."/>
            <person name="Schuster S.C."/>
            <person name="Carter N.P."/>
            <person name="Harrow J."/>
            <person name="Ning Z."/>
            <person name="Herrero J."/>
            <person name="Searle S.M."/>
            <person name="Enright A."/>
            <person name="Geisler R."/>
            <person name="Plasterk R.H."/>
            <person name="Lee C."/>
            <person name="Westerfield M."/>
            <person name="de Jong P.J."/>
            <person name="Zon L.I."/>
            <person name="Postlethwait J.H."/>
            <person name="Nusslein-Volhard C."/>
            <person name="Hubbard T.J."/>
            <person name="Roest Crollius H."/>
            <person name="Rogers J."/>
            <person name="Stemple D.L."/>
        </authorList>
    </citation>
    <scope>NUCLEOTIDE SEQUENCE [LARGE SCALE GENOMIC DNA]</scope>
    <source>
        <strain>Tuebingen</strain>
    </source>
</reference>
<reference key="3">
    <citation type="submission" date="2003-01" db="EMBL/GenBank/DDBJ databases">
        <authorList>
            <consortium name="NIH - Zebrafish Gene Collection (ZGC) project"/>
        </authorList>
    </citation>
    <scope>NUCLEOTIDE SEQUENCE [LARGE SCALE MRNA] (ISOFORM 1)</scope>
    <source>
        <strain>AB</strain>
    </source>
</reference>
<evidence type="ECO:0000250" key="1"/>
<evidence type="ECO:0000256" key="2">
    <source>
        <dbReference type="SAM" id="MobiDB-lite"/>
    </source>
</evidence>
<evidence type="ECO:0000269" key="3">
    <source>
    </source>
</evidence>
<evidence type="ECO:0000303" key="4">
    <source>
    </source>
</evidence>
<evidence type="ECO:0000305" key="5"/>